<name>MURB_STAAC</name>
<gene>
    <name evidence="1" type="primary">murB</name>
    <name type="ordered locus">SACOL0801</name>
</gene>
<organism>
    <name type="scientific">Staphylococcus aureus (strain COL)</name>
    <dbReference type="NCBI Taxonomy" id="93062"/>
    <lineage>
        <taxon>Bacteria</taxon>
        <taxon>Bacillati</taxon>
        <taxon>Bacillota</taxon>
        <taxon>Bacilli</taxon>
        <taxon>Bacillales</taxon>
        <taxon>Staphylococcaceae</taxon>
        <taxon>Staphylococcus</taxon>
    </lineage>
</organism>
<feature type="chain" id="PRO_0000179256" description="UDP-N-acetylenolpyruvoylglucosamine reductase">
    <location>
        <begin position="1"/>
        <end position="307"/>
    </location>
</feature>
<feature type="domain" description="FAD-binding PCMH-type" evidence="1">
    <location>
        <begin position="33"/>
        <end position="197"/>
    </location>
</feature>
<feature type="active site" evidence="1">
    <location>
        <position position="176"/>
    </location>
</feature>
<feature type="active site" description="Proton donor" evidence="1">
    <location>
        <position position="226"/>
    </location>
</feature>
<feature type="active site" evidence="1">
    <location>
        <position position="296"/>
    </location>
</feature>
<sequence>MINKDIYQALQQLIPNEKIKVDEPLKRYTYTKTGGNADFYITPTKNEEVQAVVKYAYQNEIPVTYLGNGSNIIIREGGIRGIVISLLSLDHIEVSDDAIIAGSGAAIIDVSRVALDYALTGLEFACGIPGSIGGAVYMNAGAYGGEVKDCIDYALCVNEQGSLIKLTTKELELDYRNSIIQKEHLVVLEAAFTLAPGKMTEIQAKMDDLTERRESKQPLEYPSCGSVFQRPPGHFAGKLIQDSNLQGHRIGGVEVSTKHAGFMVNVDNGTATDYENLIHYVQKTVKEKFGIELNREVRIIGEHPKES</sequence>
<accession>Q5HHT2</accession>
<evidence type="ECO:0000255" key="1">
    <source>
        <dbReference type="HAMAP-Rule" id="MF_00037"/>
    </source>
</evidence>
<reference key="1">
    <citation type="journal article" date="2005" name="J. Bacteriol.">
        <title>Insights on evolution of virulence and resistance from the complete genome analysis of an early methicillin-resistant Staphylococcus aureus strain and a biofilm-producing methicillin-resistant Staphylococcus epidermidis strain.</title>
        <authorList>
            <person name="Gill S.R."/>
            <person name="Fouts D.E."/>
            <person name="Archer G.L."/>
            <person name="Mongodin E.F."/>
            <person name="DeBoy R.T."/>
            <person name="Ravel J."/>
            <person name="Paulsen I.T."/>
            <person name="Kolonay J.F."/>
            <person name="Brinkac L.M."/>
            <person name="Beanan M.J."/>
            <person name="Dodson R.J."/>
            <person name="Daugherty S.C."/>
            <person name="Madupu R."/>
            <person name="Angiuoli S.V."/>
            <person name="Durkin A.S."/>
            <person name="Haft D.H."/>
            <person name="Vamathevan J.J."/>
            <person name="Khouri H."/>
            <person name="Utterback T.R."/>
            <person name="Lee C."/>
            <person name="Dimitrov G."/>
            <person name="Jiang L."/>
            <person name="Qin H."/>
            <person name="Weidman J."/>
            <person name="Tran K."/>
            <person name="Kang K.H."/>
            <person name="Hance I.R."/>
            <person name="Nelson K.E."/>
            <person name="Fraser C.M."/>
        </authorList>
    </citation>
    <scope>NUCLEOTIDE SEQUENCE [LARGE SCALE GENOMIC DNA]</scope>
    <source>
        <strain>COL</strain>
    </source>
</reference>
<protein>
    <recommendedName>
        <fullName evidence="1">UDP-N-acetylenolpyruvoylglucosamine reductase</fullName>
        <ecNumber evidence="1">1.3.1.98</ecNumber>
    </recommendedName>
    <alternativeName>
        <fullName evidence="1">UDP-N-acetylmuramate dehydrogenase</fullName>
    </alternativeName>
</protein>
<proteinExistence type="inferred from homology"/>
<keyword id="KW-0131">Cell cycle</keyword>
<keyword id="KW-0132">Cell division</keyword>
<keyword id="KW-0133">Cell shape</keyword>
<keyword id="KW-0961">Cell wall biogenesis/degradation</keyword>
<keyword id="KW-0963">Cytoplasm</keyword>
<keyword id="KW-0274">FAD</keyword>
<keyword id="KW-0285">Flavoprotein</keyword>
<keyword id="KW-0521">NADP</keyword>
<keyword id="KW-0560">Oxidoreductase</keyword>
<keyword id="KW-0573">Peptidoglycan synthesis</keyword>
<comment type="function">
    <text evidence="1">Cell wall formation.</text>
</comment>
<comment type="catalytic activity">
    <reaction evidence="1">
        <text>UDP-N-acetyl-alpha-D-muramate + NADP(+) = UDP-N-acetyl-3-O-(1-carboxyvinyl)-alpha-D-glucosamine + NADPH + H(+)</text>
        <dbReference type="Rhea" id="RHEA:12248"/>
        <dbReference type="ChEBI" id="CHEBI:15378"/>
        <dbReference type="ChEBI" id="CHEBI:57783"/>
        <dbReference type="ChEBI" id="CHEBI:58349"/>
        <dbReference type="ChEBI" id="CHEBI:68483"/>
        <dbReference type="ChEBI" id="CHEBI:70757"/>
        <dbReference type="EC" id="1.3.1.98"/>
    </reaction>
</comment>
<comment type="cofactor">
    <cofactor evidence="1">
        <name>FAD</name>
        <dbReference type="ChEBI" id="CHEBI:57692"/>
    </cofactor>
</comment>
<comment type="pathway">
    <text evidence="1">Cell wall biogenesis; peptidoglycan biosynthesis.</text>
</comment>
<comment type="subcellular location">
    <subcellularLocation>
        <location evidence="1">Cytoplasm</location>
    </subcellularLocation>
</comment>
<comment type="similarity">
    <text evidence="1">Belongs to the MurB family.</text>
</comment>
<dbReference type="EC" id="1.3.1.98" evidence="1"/>
<dbReference type="EMBL" id="CP000046">
    <property type="protein sequence ID" value="AAW37856.1"/>
    <property type="molecule type" value="Genomic_DNA"/>
</dbReference>
<dbReference type="RefSeq" id="WP_000608434.1">
    <property type="nucleotide sequence ID" value="NC_002951.2"/>
</dbReference>
<dbReference type="SMR" id="Q5HHT2"/>
<dbReference type="KEGG" id="sac:SACOL0801"/>
<dbReference type="HOGENOM" id="CLU_035304_1_1_9"/>
<dbReference type="UniPathway" id="UPA00219"/>
<dbReference type="Proteomes" id="UP000000530">
    <property type="component" value="Chromosome"/>
</dbReference>
<dbReference type="GO" id="GO:0005829">
    <property type="term" value="C:cytosol"/>
    <property type="evidence" value="ECO:0007669"/>
    <property type="project" value="TreeGrafter"/>
</dbReference>
<dbReference type="GO" id="GO:0071949">
    <property type="term" value="F:FAD binding"/>
    <property type="evidence" value="ECO:0007669"/>
    <property type="project" value="InterPro"/>
</dbReference>
<dbReference type="GO" id="GO:0008762">
    <property type="term" value="F:UDP-N-acetylmuramate dehydrogenase activity"/>
    <property type="evidence" value="ECO:0007669"/>
    <property type="project" value="UniProtKB-UniRule"/>
</dbReference>
<dbReference type="GO" id="GO:0051301">
    <property type="term" value="P:cell division"/>
    <property type="evidence" value="ECO:0007669"/>
    <property type="project" value="UniProtKB-KW"/>
</dbReference>
<dbReference type="GO" id="GO:0071555">
    <property type="term" value="P:cell wall organization"/>
    <property type="evidence" value="ECO:0007669"/>
    <property type="project" value="UniProtKB-KW"/>
</dbReference>
<dbReference type="GO" id="GO:0009252">
    <property type="term" value="P:peptidoglycan biosynthetic process"/>
    <property type="evidence" value="ECO:0007669"/>
    <property type="project" value="UniProtKB-UniRule"/>
</dbReference>
<dbReference type="GO" id="GO:0008360">
    <property type="term" value="P:regulation of cell shape"/>
    <property type="evidence" value="ECO:0007669"/>
    <property type="project" value="UniProtKB-KW"/>
</dbReference>
<dbReference type="FunFam" id="3.90.78.10:FF:000001">
    <property type="entry name" value="UDP-N-acetylenolpyruvoylglucosamine reductase"/>
    <property type="match status" value="1"/>
</dbReference>
<dbReference type="Gene3D" id="3.30.465.10">
    <property type="match status" value="1"/>
</dbReference>
<dbReference type="Gene3D" id="3.90.78.10">
    <property type="entry name" value="UDP-N-acetylenolpyruvoylglucosamine reductase, C-terminal domain"/>
    <property type="match status" value="1"/>
</dbReference>
<dbReference type="Gene3D" id="3.30.43.10">
    <property type="entry name" value="Uridine Diphospho-n-acetylenolpyruvylglucosamine Reductase, domain 2"/>
    <property type="match status" value="1"/>
</dbReference>
<dbReference type="HAMAP" id="MF_00037">
    <property type="entry name" value="MurB"/>
    <property type="match status" value="1"/>
</dbReference>
<dbReference type="InterPro" id="IPR016166">
    <property type="entry name" value="FAD-bd_PCMH"/>
</dbReference>
<dbReference type="InterPro" id="IPR036318">
    <property type="entry name" value="FAD-bd_PCMH-like_sf"/>
</dbReference>
<dbReference type="InterPro" id="IPR016167">
    <property type="entry name" value="FAD-bd_PCMH_sub1"/>
</dbReference>
<dbReference type="InterPro" id="IPR016169">
    <property type="entry name" value="FAD-bd_PCMH_sub2"/>
</dbReference>
<dbReference type="InterPro" id="IPR003170">
    <property type="entry name" value="MurB"/>
</dbReference>
<dbReference type="InterPro" id="IPR011601">
    <property type="entry name" value="MurB_C"/>
</dbReference>
<dbReference type="InterPro" id="IPR036635">
    <property type="entry name" value="MurB_C_sf"/>
</dbReference>
<dbReference type="InterPro" id="IPR006094">
    <property type="entry name" value="Oxid_FAD_bind_N"/>
</dbReference>
<dbReference type="NCBIfam" id="TIGR00179">
    <property type="entry name" value="murB"/>
    <property type="match status" value="1"/>
</dbReference>
<dbReference type="NCBIfam" id="NF010480">
    <property type="entry name" value="PRK13905.1"/>
    <property type="match status" value="1"/>
</dbReference>
<dbReference type="PANTHER" id="PTHR21071">
    <property type="entry name" value="UDP-N-ACETYLENOLPYRUVOYLGLUCOSAMINE REDUCTASE"/>
    <property type="match status" value="1"/>
</dbReference>
<dbReference type="PANTHER" id="PTHR21071:SF4">
    <property type="entry name" value="UDP-N-ACETYLENOLPYRUVOYLGLUCOSAMINE REDUCTASE"/>
    <property type="match status" value="1"/>
</dbReference>
<dbReference type="Pfam" id="PF01565">
    <property type="entry name" value="FAD_binding_4"/>
    <property type="match status" value="1"/>
</dbReference>
<dbReference type="Pfam" id="PF02873">
    <property type="entry name" value="MurB_C"/>
    <property type="match status" value="1"/>
</dbReference>
<dbReference type="SUPFAM" id="SSF56176">
    <property type="entry name" value="FAD-binding/transporter-associated domain-like"/>
    <property type="match status" value="1"/>
</dbReference>
<dbReference type="SUPFAM" id="SSF56194">
    <property type="entry name" value="Uridine diphospho-N-Acetylenolpyruvylglucosamine reductase, MurB, C-terminal domain"/>
    <property type="match status" value="1"/>
</dbReference>
<dbReference type="PROSITE" id="PS51387">
    <property type="entry name" value="FAD_PCMH"/>
    <property type="match status" value="1"/>
</dbReference>